<comment type="function">
    <text evidence="1">DNA-dependent RNA polymerase catalyzes the transcription of DNA into RNA using the four ribonucleoside triphosphates as substrates.</text>
</comment>
<comment type="catalytic activity">
    <reaction evidence="1">
        <text>RNA(n) + a ribonucleoside 5'-triphosphate = RNA(n+1) + diphosphate</text>
        <dbReference type="Rhea" id="RHEA:21248"/>
        <dbReference type="Rhea" id="RHEA-COMP:14527"/>
        <dbReference type="Rhea" id="RHEA-COMP:17342"/>
        <dbReference type="ChEBI" id="CHEBI:33019"/>
        <dbReference type="ChEBI" id="CHEBI:61557"/>
        <dbReference type="ChEBI" id="CHEBI:140395"/>
        <dbReference type="EC" id="2.7.7.6"/>
    </reaction>
</comment>
<comment type="subunit">
    <text evidence="1">The RNAP catalytic core consists of 2 alpha, 1 beta, 1 beta' and 1 omega subunit. When a sigma factor is associated with the core the holoenzyme is formed, which can initiate transcription.</text>
</comment>
<comment type="similarity">
    <text evidence="1">Belongs to the RNA polymerase beta chain family.</text>
</comment>
<sequence length="1270" mass="142454">MSSNTVNQRVNFASTKNPLEYPDFLEVQLKSFQDFLQLDTPPEKRKKEGLYKVFAENFPIADTRNNFVLEFLDYYIDPPRYTIDDCIERGLTYSVPLKAKLKLYCTDPDHEDFDTVIQDVFLGPIPYMTDKATFVINGAERVVVSQLHRSPGVFFGQSVHANGTKLYSARIIPFKGSWIEFATDINNVMYAYIDRKKKLPVTTLLRAIGFENDKDILEIFNLAEDVKVNKTNLKKVVGRKLAARVLKTWIEDFVDEDTGEVVSIERNEVIIDRETVIEPEHIDEIIDSGVQNILIHKEEPNQSDYSIIYNTLQKDPSNSEKEAVLYIYRQLRNADPADDASAREVINNLFFSEKRYDLGDVGRYRINKKLNLTTDMDVRVLTKEDIIEIIKYLIELINSKADVDDIDHLSNRRVRTVGEQLSNQFAVGLARMSRTIRERMNVRDNEVFTPIDLINAKTISSVINSFFGTNALSQFMDQTNPLAEITHKRRMSALGPGGLSRERAGFEVRDVHYTHYGRLCPIETPEGPNIGLISSLCVFAKINDLGFIETPYRKVDNGKVDLSENGLVYLTAEEEEAKIIAQGNAPLNDDGTFIRNKVKSRQDADYPVVEPSEVELMDVAPQQIASIAASLIPFLEHDDANRALMGSNMMRQAVPLLRSEAPIVGTGIERQLVRDSRTQIAAEGDGVIDFVDATTIRILYDRTEDEEFVSFEPALKEYRIPKFRKTNQNMTIDLRPTCNKGDRVTKGQILTEGYSTENGELALGKNLLVAYMPWKGYNYEDAIVLNERVVREDLLTSVHVEEYSLEVRETKRGMEELTSDIPNVSEEATKDLDENGIVRVGARIQPGDILIGKITPKGESDPSPEEKLLRAIFGDKAGDVKDASLKASPSLKGVIIDKKLFSRVIKNRSSKLADKALLPKIDDEFESKVADLKRILVKKLMVLTEGKVSQGVKDYLGAEVIAKGSKFSASDFDSLDFTAIQLSDWTNDDHANGMIRDLILNFIKKYKELDAELKRKKFAITIGDELPAGIIQMAKVYIAKKRKIGVGDKMAGRHGNKGIVSRVVRQEDMPFLEDGTPVDIVLNPLGVPSRMNIGQIFEAVLGRAGKNLGVKFATPIFDGATLDDLNEWTDKAGLPRYCKTYLCDGGTGERFDQPATVGVTYMLKLGHMVEDKMHARSIGPYSLITQQPLGGKAQFGGQRFGEMEVWALEGFGASHILQEILTIKSDDVVGRSKAYEAIVKGEPMPQPGIPESLNVLLHELRGLGLSINLE</sequence>
<feature type="chain" id="PRO_0000224030" description="DNA-directed RNA polymerase subunit beta">
    <location>
        <begin position="1"/>
        <end position="1270"/>
    </location>
</feature>
<proteinExistence type="inferred from homology"/>
<gene>
    <name evidence="1" type="primary">rpoB</name>
    <name type="ordered locus">BF4192</name>
</gene>
<dbReference type="EC" id="2.7.7.6" evidence="1"/>
<dbReference type="EMBL" id="AP006841">
    <property type="protein sequence ID" value="BAD50935.1"/>
    <property type="molecule type" value="Genomic_DNA"/>
</dbReference>
<dbReference type="RefSeq" id="WP_005791521.1">
    <property type="nucleotide sequence ID" value="NZ_UYXF01000007.1"/>
</dbReference>
<dbReference type="RefSeq" id="YP_101469.1">
    <property type="nucleotide sequence ID" value="NC_006347.1"/>
</dbReference>
<dbReference type="SMR" id="Q64NJ7"/>
<dbReference type="STRING" id="295405.BF4192"/>
<dbReference type="GeneID" id="60367309"/>
<dbReference type="KEGG" id="bfr:BF4192"/>
<dbReference type="PATRIC" id="fig|295405.11.peg.4047"/>
<dbReference type="HOGENOM" id="CLU_000524_4_1_10"/>
<dbReference type="OrthoDB" id="9803954at2"/>
<dbReference type="Proteomes" id="UP000002197">
    <property type="component" value="Chromosome"/>
</dbReference>
<dbReference type="GO" id="GO:0000428">
    <property type="term" value="C:DNA-directed RNA polymerase complex"/>
    <property type="evidence" value="ECO:0007669"/>
    <property type="project" value="UniProtKB-KW"/>
</dbReference>
<dbReference type="GO" id="GO:0003677">
    <property type="term" value="F:DNA binding"/>
    <property type="evidence" value="ECO:0007669"/>
    <property type="project" value="UniProtKB-UniRule"/>
</dbReference>
<dbReference type="GO" id="GO:0003899">
    <property type="term" value="F:DNA-directed RNA polymerase activity"/>
    <property type="evidence" value="ECO:0007669"/>
    <property type="project" value="UniProtKB-UniRule"/>
</dbReference>
<dbReference type="GO" id="GO:0032549">
    <property type="term" value="F:ribonucleoside binding"/>
    <property type="evidence" value="ECO:0007669"/>
    <property type="project" value="InterPro"/>
</dbReference>
<dbReference type="GO" id="GO:0006351">
    <property type="term" value="P:DNA-templated transcription"/>
    <property type="evidence" value="ECO:0007669"/>
    <property type="project" value="UniProtKB-UniRule"/>
</dbReference>
<dbReference type="CDD" id="cd00653">
    <property type="entry name" value="RNA_pol_B_RPB2"/>
    <property type="match status" value="1"/>
</dbReference>
<dbReference type="Gene3D" id="2.40.50.100">
    <property type="match status" value="1"/>
</dbReference>
<dbReference type="Gene3D" id="2.40.50.150">
    <property type="match status" value="1"/>
</dbReference>
<dbReference type="Gene3D" id="3.90.1100.10">
    <property type="match status" value="2"/>
</dbReference>
<dbReference type="Gene3D" id="2.30.150.10">
    <property type="entry name" value="DNA-directed RNA polymerase, beta subunit, external 1 domain"/>
    <property type="match status" value="1"/>
</dbReference>
<dbReference type="Gene3D" id="2.40.270.10">
    <property type="entry name" value="DNA-directed RNA polymerase, subunit 2, domain 6"/>
    <property type="match status" value="3"/>
</dbReference>
<dbReference type="Gene3D" id="3.90.1800.10">
    <property type="entry name" value="RNA polymerase alpha subunit dimerisation domain"/>
    <property type="match status" value="1"/>
</dbReference>
<dbReference type="Gene3D" id="3.90.1110.10">
    <property type="entry name" value="RNA polymerase Rpb2, domain 2"/>
    <property type="match status" value="2"/>
</dbReference>
<dbReference type="HAMAP" id="MF_01321">
    <property type="entry name" value="RNApol_bact_RpoB"/>
    <property type="match status" value="1"/>
</dbReference>
<dbReference type="InterPro" id="IPR042107">
    <property type="entry name" value="DNA-dir_RNA_pol_bsu_ext_1_sf"/>
</dbReference>
<dbReference type="InterPro" id="IPR019462">
    <property type="entry name" value="DNA-dir_RNA_pol_bsu_external_1"/>
</dbReference>
<dbReference type="InterPro" id="IPR015712">
    <property type="entry name" value="DNA-dir_RNA_pol_su2"/>
</dbReference>
<dbReference type="InterPro" id="IPR007120">
    <property type="entry name" value="DNA-dir_RNAP_su2_dom"/>
</dbReference>
<dbReference type="InterPro" id="IPR037033">
    <property type="entry name" value="DNA-dir_RNAP_su2_hyb_sf"/>
</dbReference>
<dbReference type="InterPro" id="IPR010243">
    <property type="entry name" value="RNA_pol_bsu_bac"/>
</dbReference>
<dbReference type="InterPro" id="IPR007121">
    <property type="entry name" value="RNA_pol_bsu_CS"/>
</dbReference>
<dbReference type="InterPro" id="IPR007644">
    <property type="entry name" value="RNA_pol_bsu_protrusion"/>
</dbReference>
<dbReference type="InterPro" id="IPR007642">
    <property type="entry name" value="RNA_pol_Rpb2_2"/>
</dbReference>
<dbReference type="InterPro" id="IPR037034">
    <property type="entry name" value="RNA_pol_Rpb2_2_sf"/>
</dbReference>
<dbReference type="InterPro" id="IPR007645">
    <property type="entry name" value="RNA_pol_Rpb2_3"/>
</dbReference>
<dbReference type="InterPro" id="IPR007641">
    <property type="entry name" value="RNA_pol_Rpb2_7"/>
</dbReference>
<dbReference type="InterPro" id="IPR014724">
    <property type="entry name" value="RNA_pol_RPB2_OB-fold"/>
</dbReference>
<dbReference type="NCBIfam" id="NF001616">
    <property type="entry name" value="PRK00405.1"/>
    <property type="match status" value="1"/>
</dbReference>
<dbReference type="NCBIfam" id="TIGR02013">
    <property type="entry name" value="rpoB"/>
    <property type="match status" value="1"/>
</dbReference>
<dbReference type="PANTHER" id="PTHR20856">
    <property type="entry name" value="DNA-DIRECTED RNA POLYMERASE I SUBUNIT 2"/>
    <property type="match status" value="1"/>
</dbReference>
<dbReference type="Pfam" id="PF04563">
    <property type="entry name" value="RNA_pol_Rpb2_1"/>
    <property type="match status" value="2"/>
</dbReference>
<dbReference type="Pfam" id="PF04561">
    <property type="entry name" value="RNA_pol_Rpb2_2"/>
    <property type="match status" value="2"/>
</dbReference>
<dbReference type="Pfam" id="PF04565">
    <property type="entry name" value="RNA_pol_Rpb2_3"/>
    <property type="match status" value="1"/>
</dbReference>
<dbReference type="Pfam" id="PF10385">
    <property type="entry name" value="RNA_pol_Rpb2_45"/>
    <property type="match status" value="1"/>
</dbReference>
<dbReference type="Pfam" id="PF00562">
    <property type="entry name" value="RNA_pol_Rpb2_6"/>
    <property type="match status" value="1"/>
</dbReference>
<dbReference type="Pfam" id="PF04560">
    <property type="entry name" value="RNA_pol_Rpb2_7"/>
    <property type="match status" value="1"/>
</dbReference>
<dbReference type="SUPFAM" id="SSF64484">
    <property type="entry name" value="beta and beta-prime subunits of DNA dependent RNA-polymerase"/>
    <property type="match status" value="1"/>
</dbReference>
<dbReference type="PROSITE" id="PS01166">
    <property type="entry name" value="RNA_POL_BETA"/>
    <property type="match status" value="1"/>
</dbReference>
<accession>Q64NJ7</accession>
<name>RPOB_BACFR</name>
<organism>
    <name type="scientific">Bacteroides fragilis (strain YCH46)</name>
    <dbReference type="NCBI Taxonomy" id="295405"/>
    <lineage>
        <taxon>Bacteria</taxon>
        <taxon>Pseudomonadati</taxon>
        <taxon>Bacteroidota</taxon>
        <taxon>Bacteroidia</taxon>
        <taxon>Bacteroidales</taxon>
        <taxon>Bacteroidaceae</taxon>
        <taxon>Bacteroides</taxon>
    </lineage>
</organism>
<protein>
    <recommendedName>
        <fullName evidence="1">DNA-directed RNA polymerase subunit beta</fullName>
        <shortName evidence="1">RNAP subunit beta</shortName>
        <ecNumber evidence="1">2.7.7.6</ecNumber>
    </recommendedName>
    <alternativeName>
        <fullName evidence="1">RNA polymerase subunit beta</fullName>
    </alternativeName>
    <alternativeName>
        <fullName evidence="1">Transcriptase subunit beta</fullName>
    </alternativeName>
</protein>
<reference key="1">
    <citation type="journal article" date="2004" name="Proc. Natl. Acad. Sci. U.S.A.">
        <title>Genomic analysis of Bacteroides fragilis reveals extensive DNA inversions regulating cell surface adaptation.</title>
        <authorList>
            <person name="Kuwahara T."/>
            <person name="Yamashita A."/>
            <person name="Hirakawa H."/>
            <person name="Nakayama H."/>
            <person name="Toh H."/>
            <person name="Okada N."/>
            <person name="Kuhara S."/>
            <person name="Hattori M."/>
            <person name="Hayashi T."/>
            <person name="Ohnishi Y."/>
        </authorList>
    </citation>
    <scope>NUCLEOTIDE SEQUENCE [LARGE SCALE GENOMIC DNA]</scope>
    <source>
        <strain>YCH46</strain>
    </source>
</reference>
<evidence type="ECO:0000255" key="1">
    <source>
        <dbReference type="HAMAP-Rule" id="MF_01321"/>
    </source>
</evidence>
<keyword id="KW-0240">DNA-directed RNA polymerase</keyword>
<keyword id="KW-0548">Nucleotidyltransferase</keyword>
<keyword id="KW-0804">Transcription</keyword>
<keyword id="KW-0808">Transferase</keyword>